<organism>
    <name type="scientific">Homo sapiens</name>
    <name type="common">Human</name>
    <dbReference type="NCBI Taxonomy" id="9606"/>
    <lineage>
        <taxon>Eukaryota</taxon>
        <taxon>Metazoa</taxon>
        <taxon>Chordata</taxon>
        <taxon>Craniata</taxon>
        <taxon>Vertebrata</taxon>
        <taxon>Euteleostomi</taxon>
        <taxon>Mammalia</taxon>
        <taxon>Eutheria</taxon>
        <taxon>Euarchontoglires</taxon>
        <taxon>Primates</taxon>
        <taxon>Haplorrhini</taxon>
        <taxon>Catarrhini</taxon>
        <taxon>Hominidae</taxon>
        <taxon>Homo</taxon>
    </lineage>
</organism>
<name>FA47D_HUMAN</name>
<comment type="similarity">
    <text evidence="1">Belongs to the FAM47 family.</text>
</comment>
<comment type="caution">
    <text evidence="1">Could be the product of a pseudogene.</text>
</comment>
<accession>A6NHR8</accession>
<dbReference type="EMBL" id="AL627244">
    <property type="status" value="NOT_ANNOTATED_CDS"/>
    <property type="molecule type" value="Genomic_DNA"/>
</dbReference>
<dbReference type="SMR" id="A6NHR8"/>
<dbReference type="GlyGen" id="A6NHR8">
    <property type="glycosylation" value="1 site, 1 O-linked glycan (1 site)"/>
</dbReference>
<dbReference type="BioMuta" id="HGNC:34342"/>
<dbReference type="MassIVE" id="A6NHR8"/>
<dbReference type="ProteomicsDB" id="1219"/>
<dbReference type="AGR" id="HGNC:34342"/>
<dbReference type="GeneCards" id="FAM47DP"/>
<dbReference type="HGNC" id="HGNC:34342">
    <property type="gene designation" value="FAM47DP"/>
</dbReference>
<dbReference type="neXtProt" id="NX_A6NHR8"/>
<dbReference type="InParanoid" id="A6NHR8"/>
<dbReference type="PAN-GO" id="A6NHR8">
    <property type="GO annotations" value="0 GO annotations based on evolutionary models"/>
</dbReference>
<dbReference type="PhylomeDB" id="A6NHR8"/>
<dbReference type="Pharos" id="A6NHR8">
    <property type="development level" value="Tdark"/>
</dbReference>
<dbReference type="Proteomes" id="UP000005640">
    <property type="component" value="Unplaced"/>
</dbReference>
<dbReference type="RNAct" id="A6NHR8">
    <property type="molecule type" value="protein"/>
</dbReference>
<dbReference type="InterPro" id="IPR032743">
    <property type="entry name" value="FAM47"/>
</dbReference>
<dbReference type="PANTHER" id="PTHR47415">
    <property type="entry name" value="PROTEIN FAM47B"/>
    <property type="match status" value="1"/>
</dbReference>
<dbReference type="PANTHER" id="PTHR47415:SF2">
    <property type="entry name" value="PROTEIN FAM47C-RELATED"/>
    <property type="match status" value="1"/>
</dbReference>
<dbReference type="Pfam" id="PF14642">
    <property type="entry name" value="FAM47"/>
    <property type="match status" value="1"/>
</dbReference>
<evidence type="ECO:0000305" key="1"/>
<protein>
    <recommendedName>
        <fullName>Putative protein FAM47D</fullName>
    </recommendedName>
</protein>
<proteinExistence type="uncertain"/>
<sequence>MGDQRPRDRPRSPGMDCKPWYCDKPPSKYIAKRKHRRLRFPPMDTQNWVFVKESMDSFHYGCPSPEDMLICRLNEFLLPKISHRGPQADPKSRQKKLLKKVALFSKLLPAQPAWKAFVEEAQLMAKHPLAMYPNLGEDMPPDLLLQMLKLLDPERKLEKAWAYCEGREKTIKEPTKPEPPKAPVSHHFLEPPKIRASCLKELLQEDTPSTTECVSDSLQHRYTSRKMHDFKWARDMGVDEESIRNLFDFTPKWRATYEDQQIKKIKEWVSELQYRIKLDEMDEVESSQEKDWDRKLQMAPNSYTAQCVKMRYGVWYLKPKLGKKLRSDQPLIDPKLLLEKPDEPDILDDLYGPIAFKDFILSKGYEMPGIIERLCARKGWTYDSVKTPVQRAMRLYK</sequence>
<gene>
    <name type="primary">FAM47DP</name>
</gene>
<reference key="1">
    <citation type="journal article" date="2005" name="Nature">
        <title>The DNA sequence of the human X chromosome.</title>
        <authorList>
            <person name="Ross M.T."/>
            <person name="Grafham D.V."/>
            <person name="Coffey A.J."/>
            <person name="Scherer S."/>
            <person name="McLay K."/>
            <person name="Muzny D."/>
            <person name="Platzer M."/>
            <person name="Howell G.R."/>
            <person name="Burrows C."/>
            <person name="Bird C.P."/>
            <person name="Frankish A."/>
            <person name="Lovell F.L."/>
            <person name="Howe K.L."/>
            <person name="Ashurst J.L."/>
            <person name="Fulton R.S."/>
            <person name="Sudbrak R."/>
            <person name="Wen G."/>
            <person name="Jones M.C."/>
            <person name="Hurles M.E."/>
            <person name="Andrews T.D."/>
            <person name="Scott C.E."/>
            <person name="Searle S."/>
            <person name="Ramser J."/>
            <person name="Whittaker A."/>
            <person name="Deadman R."/>
            <person name="Carter N.P."/>
            <person name="Hunt S.E."/>
            <person name="Chen R."/>
            <person name="Cree A."/>
            <person name="Gunaratne P."/>
            <person name="Havlak P."/>
            <person name="Hodgson A."/>
            <person name="Metzker M.L."/>
            <person name="Richards S."/>
            <person name="Scott G."/>
            <person name="Steffen D."/>
            <person name="Sodergren E."/>
            <person name="Wheeler D.A."/>
            <person name="Worley K.C."/>
            <person name="Ainscough R."/>
            <person name="Ambrose K.D."/>
            <person name="Ansari-Lari M.A."/>
            <person name="Aradhya S."/>
            <person name="Ashwell R.I."/>
            <person name="Babbage A.K."/>
            <person name="Bagguley C.L."/>
            <person name="Ballabio A."/>
            <person name="Banerjee R."/>
            <person name="Barker G.E."/>
            <person name="Barlow K.F."/>
            <person name="Barrett I.P."/>
            <person name="Bates K.N."/>
            <person name="Beare D.M."/>
            <person name="Beasley H."/>
            <person name="Beasley O."/>
            <person name="Beck A."/>
            <person name="Bethel G."/>
            <person name="Blechschmidt K."/>
            <person name="Brady N."/>
            <person name="Bray-Allen S."/>
            <person name="Bridgeman A.M."/>
            <person name="Brown A.J."/>
            <person name="Brown M.J."/>
            <person name="Bonnin D."/>
            <person name="Bruford E.A."/>
            <person name="Buhay C."/>
            <person name="Burch P."/>
            <person name="Burford D."/>
            <person name="Burgess J."/>
            <person name="Burrill W."/>
            <person name="Burton J."/>
            <person name="Bye J.M."/>
            <person name="Carder C."/>
            <person name="Carrel L."/>
            <person name="Chako J."/>
            <person name="Chapman J.C."/>
            <person name="Chavez D."/>
            <person name="Chen E."/>
            <person name="Chen G."/>
            <person name="Chen Y."/>
            <person name="Chen Z."/>
            <person name="Chinault C."/>
            <person name="Ciccodicola A."/>
            <person name="Clark S.Y."/>
            <person name="Clarke G."/>
            <person name="Clee C.M."/>
            <person name="Clegg S."/>
            <person name="Clerc-Blankenburg K."/>
            <person name="Clifford K."/>
            <person name="Cobley V."/>
            <person name="Cole C.G."/>
            <person name="Conquer J.S."/>
            <person name="Corby N."/>
            <person name="Connor R.E."/>
            <person name="David R."/>
            <person name="Davies J."/>
            <person name="Davis C."/>
            <person name="Davis J."/>
            <person name="Delgado O."/>
            <person name="Deshazo D."/>
            <person name="Dhami P."/>
            <person name="Ding Y."/>
            <person name="Dinh H."/>
            <person name="Dodsworth S."/>
            <person name="Draper H."/>
            <person name="Dugan-Rocha S."/>
            <person name="Dunham A."/>
            <person name="Dunn M."/>
            <person name="Durbin K.J."/>
            <person name="Dutta I."/>
            <person name="Eades T."/>
            <person name="Ellwood M."/>
            <person name="Emery-Cohen A."/>
            <person name="Errington H."/>
            <person name="Evans K.L."/>
            <person name="Faulkner L."/>
            <person name="Francis F."/>
            <person name="Frankland J."/>
            <person name="Fraser A.E."/>
            <person name="Galgoczy P."/>
            <person name="Gilbert J."/>
            <person name="Gill R."/>
            <person name="Gloeckner G."/>
            <person name="Gregory S.G."/>
            <person name="Gribble S."/>
            <person name="Griffiths C."/>
            <person name="Grocock R."/>
            <person name="Gu Y."/>
            <person name="Gwilliam R."/>
            <person name="Hamilton C."/>
            <person name="Hart E.A."/>
            <person name="Hawes A."/>
            <person name="Heath P.D."/>
            <person name="Heitmann K."/>
            <person name="Hennig S."/>
            <person name="Hernandez J."/>
            <person name="Hinzmann B."/>
            <person name="Ho S."/>
            <person name="Hoffs M."/>
            <person name="Howden P.J."/>
            <person name="Huckle E.J."/>
            <person name="Hume J."/>
            <person name="Hunt P.J."/>
            <person name="Hunt A.R."/>
            <person name="Isherwood J."/>
            <person name="Jacob L."/>
            <person name="Johnson D."/>
            <person name="Jones S."/>
            <person name="de Jong P.J."/>
            <person name="Joseph S.S."/>
            <person name="Keenan S."/>
            <person name="Kelly S."/>
            <person name="Kershaw J.K."/>
            <person name="Khan Z."/>
            <person name="Kioschis P."/>
            <person name="Klages S."/>
            <person name="Knights A.J."/>
            <person name="Kosiura A."/>
            <person name="Kovar-Smith C."/>
            <person name="Laird G.K."/>
            <person name="Langford C."/>
            <person name="Lawlor S."/>
            <person name="Leversha M."/>
            <person name="Lewis L."/>
            <person name="Liu W."/>
            <person name="Lloyd C."/>
            <person name="Lloyd D.M."/>
            <person name="Loulseged H."/>
            <person name="Loveland J.E."/>
            <person name="Lovell J.D."/>
            <person name="Lozado R."/>
            <person name="Lu J."/>
            <person name="Lyne R."/>
            <person name="Ma J."/>
            <person name="Maheshwari M."/>
            <person name="Matthews L.H."/>
            <person name="McDowall J."/>
            <person name="McLaren S."/>
            <person name="McMurray A."/>
            <person name="Meidl P."/>
            <person name="Meitinger T."/>
            <person name="Milne S."/>
            <person name="Miner G."/>
            <person name="Mistry S.L."/>
            <person name="Morgan M."/>
            <person name="Morris S."/>
            <person name="Mueller I."/>
            <person name="Mullikin J.C."/>
            <person name="Nguyen N."/>
            <person name="Nordsiek G."/>
            <person name="Nyakatura G."/>
            <person name="O'dell C.N."/>
            <person name="Okwuonu G."/>
            <person name="Palmer S."/>
            <person name="Pandian R."/>
            <person name="Parker D."/>
            <person name="Parrish J."/>
            <person name="Pasternak S."/>
            <person name="Patel D."/>
            <person name="Pearce A.V."/>
            <person name="Pearson D.M."/>
            <person name="Pelan S.E."/>
            <person name="Perez L."/>
            <person name="Porter K.M."/>
            <person name="Ramsey Y."/>
            <person name="Reichwald K."/>
            <person name="Rhodes S."/>
            <person name="Ridler K.A."/>
            <person name="Schlessinger D."/>
            <person name="Schueler M.G."/>
            <person name="Sehra H.K."/>
            <person name="Shaw-Smith C."/>
            <person name="Shen H."/>
            <person name="Sheridan E.M."/>
            <person name="Shownkeen R."/>
            <person name="Skuce C.D."/>
            <person name="Smith M.L."/>
            <person name="Sotheran E.C."/>
            <person name="Steingruber H.E."/>
            <person name="Steward C.A."/>
            <person name="Storey R."/>
            <person name="Swann R.M."/>
            <person name="Swarbreck D."/>
            <person name="Tabor P.E."/>
            <person name="Taudien S."/>
            <person name="Taylor T."/>
            <person name="Teague B."/>
            <person name="Thomas K."/>
            <person name="Thorpe A."/>
            <person name="Timms K."/>
            <person name="Tracey A."/>
            <person name="Trevanion S."/>
            <person name="Tromans A.C."/>
            <person name="d'Urso M."/>
            <person name="Verduzco D."/>
            <person name="Villasana D."/>
            <person name="Waldron L."/>
            <person name="Wall M."/>
            <person name="Wang Q."/>
            <person name="Warren J."/>
            <person name="Warry G.L."/>
            <person name="Wei X."/>
            <person name="West A."/>
            <person name="Whitehead S.L."/>
            <person name="Whiteley M.N."/>
            <person name="Wilkinson J.E."/>
            <person name="Willey D.L."/>
            <person name="Williams G."/>
            <person name="Williams L."/>
            <person name="Williamson A."/>
            <person name="Williamson H."/>
            <person name="Wilming L."/>
            <person name="Woodmansey R.L."/>
            <person name="Wray P.W."/>
            <person name="Yen J."/>
            <person name="Zhang J."/>
            <person name="Zhou J."/>
            <person name="Zoghbi H."/>
            <person name="Zorilla S."/>
            <person name="Buck D."/>
            <person name="Reinhardt R."/>
            <person name="Poustka A."/>
            <person name="Rosenthal A."/>
            <person name="Lehrach H."/>
            <person name="Meindl A."/>
            <person name="Minx P.J."/>
            <person name="Hillier L.W."/>
            <person name="Willard H.F."/>
            <person name="Wilson R.K."/>
            <person name="Waterston R.H."/>
            <person name="Rice C.M."/>
            <person name="Vaudin M."/>
            <person name="Coulson A."/>
            <person name="Nelson D.L."/>
            <person name="Weinstock G."/>
            <person name="Sulston J.E."/>
            <person name="Durbin R.M."/>
            <person name="Hubbard T."/>
            <person name="Gibbs R.A."/>
            <person name="Beck S."/>
            <person name="Rogers J."/>
            <person name="Bentley D.R."/>
        </authorList>
    </citation>
    <scope>NUCLEOTIDE SEQUENCE [LARGE SCALE GENOMIC DNA]</scope>
</reference>
<feature type="chain" id="PRO_0000342588" description="Putative protein FAM47D">
    <location>
        <begin position="1"/>
        <end position="397"/>
    </location>
</feature>
<keyword id="KW-1185">Reference proteome</keyword>